<feature type="chain" id="PRO_1000011560" description="GTPase Der">
    <location>
        <begin position="1"/>
        <end position="436"/>
    </location>
</feature>
<feature type="domain" description="EngA-type G 1">
    <location>
        <begin position="4"/>
        <end position="167"/>
    </location>
</feature>
<feature type="domain" description="EngA-type G 2">
    <location>
        <begin position="176"/>
        <end position="351"/>
    </location>
</feature>
<feature type="domain" description="KH-like" evidence="1">
    <location>
        <begin position="352"/>
        <end position="436"/>
    </location>
</feature>
<feature type="binding site" evidence="1">
    <location>
        <begin position="10"/>
        <end position="17"/>
    </location>
    <ligand>
        <name>GTP</name>
        <dbReference type="ChEBI" id="CHEBI:37565"/>
        <label>1</label>
    </ligand>
</feature>
<feature type="binding site" evidence="1">
    <location>
        <begin position="57"/>
        <end position="61"/>
    </location>
    <ligand>
        <name>GTP</name>
        <dbReference type="ChEBI" id="CHEBI:37565"/>
        <label>1</label>
    </ligand>
</feature>
<feature type="binding site" evidence="1">
    <location>
        <begin position="119"/>
        <end position="122"/>
    </location>
    <ligand>
        <name>GTP</name>
        <dbReference type="ChEBI" id="CHEBI:37565"/>
        <label>1</label>
    </ligand>
</feature>
<feature type="binding site" evidence="1">
    <location>
        <begin position="182"/>
        <end position="189"/>
    </location>
    <ligand>
        <name>GTP</name>
        <dbReference type="ChEBI" id="CHEBI:37565"/>
        <label>2</label>
    </ligand>
</feature>
<feature type="binding site" evidence="1">
    <location>
        <begin position="229"/>
        <end position="233"/>
    </location>
    <ligand>
        <name>GTP</name>
        <dbReference type="ChEBI" id="CHEBI:37565"/>
        <label>2</label>
    </ligand>
</feature>
<feature type="binding site" evidence="1">
    <location>
        <begin position="294"/>
        <end position="297"/>
    </location>
    <ligand>
        <name>GTP</name>
        <dbReference type="ChEBI" id="CHEBI:37565"/>
        <label>2</label>
    </ligand>
</feature>
<gene>
    <name evidence="1" type="primary">der</name>
    <name type="synonym">engA</name>
    <name type="ordered locus">BCE_1631</name>
</gene>
<name>DER_BACC1</name>
<dbReference type="EMBL" id="AE017194">
    <property type="protein sequence ID" value="AAS40560.1"/>
    <property type="molecule type" value="Genomic_DNA"/>
</dbReference>
<dbReference type="SMR" id="Q73AZ1"/>
<dbReference type="KEGG" id="bca:BCE_1631"/>
<dbReference type="HOGENOM" id="CLU_016077_6_2_9"/>
<dbReference type="Proteomes" id="UP000002527">
    <property type="component" value="Chromosome"/>
</dbReference>
<dbReference type="GO" id="GO:0005525">
    <property type="term" value="F:GTP binding"/>
    <property type="evidence" value="ECO:0007669"/>
    <property type="project" value="UniProtKB-UniRule"/>
</dbReference>
<dbReference type="GO" id="GO:0043022">
    <property type="term" value="F:ribosome binding"/>
    <property type="evidence" value="ECO:0007669"/>
    <property type="project" value="TreeGrafter"/>
</dbReference>
<dbReference type="GO" id="GO:0042254">
    <property type="term" value="P:ribosome biogenesis"/>
    <property type="evidence" value="ECO:0007669"/>
    <property type="project" value="UniProtKB-KW"/>
</dbReference>
<dbReference type="CDD" id="cd01894">
    <property type="entry name" value="EngA1"/>
    <property type="match status" value="1"/>
</dbReference>
<dbReference type="CDD" id="cd01895">
    <property type="entry name" value="EngA2"/>
    <property type="match status" value="1"/>
</dbReference>
<dbReference type="FunFam" id="3.30.300.20:FF:000004">
    <property type="entry name" value="GTPase Der"/>
    <property type="match status" value="1"/>
</dbReference>
<dbReference type="FunFam" id="3.40.50.300:FF:000040">
    <property type="entry name" value="GTPase Der"/>
    <property type="match status" value="1"/>
</dbReference>
<dbReference type="FunFam" id="3.40.50.300:FF:000057">
    <property type="entry name" value="GTPase Der"/>
    <property type="match status" value="1"/>
</dbReference>
<dbReference type="Gene3D" id="3.30.300.20">
    <property type="match status" value="1"/>
</dbReference>
<dbReference type="Gene3D" id="3.40.50.300">
    <property type="entry name" value="P-loop containing nucleotide triphosphate hydrolases"/>
    <property type="match status" value="2"/>
</dbReference>
<dbReference type="HAMAP" id="MF_00195">
    <property type="entry name" value="GTPase_Der"/>
    <property type="match status" value="1"/>
</dbReference>
<dbReference type="InterPro" id="IPR031166">
    <property type="entry name" value="G_ENGA"/>
</dbReference>
<dbReference type="InterPro" id="IPR006073">
    <property type="entry name" value="GTP-bd"/>
</dbReference>
<dbReference type="InterPro" id="IPR016484">
    <property type="entry name" value="GTPase_Der"/>
</dbReference>
<dbReference type="InterPro" id="IPR032859">
    <property type="entry name" value="KH_dom-like"/>
</dbReference>
<dbReference type="InterPro" id="IPR015946">
    <property type="entry name" value="KH_dom-like_a/b"/>
</dbReference>
<dbReference type="InterPro" id="IPR027417">
    <property type="entry name" value="P-loop_NTPase"/>
</dbReference>
<dbReference type="InterPro" id="IPR005225">
    <property type="entry name" value="Small_GTP-bd"/>
</dbReference>
<dbReference type="NCBIfam" id="TIGR03594">
    <property type="entry name" value="GTPase_EngA"/>
    <property type="match status" value="1"/>
</dbReference>
<dbReference type="NCBIfam" id="TIGR00231">
    <property type="entry name" value="small_GTP"/>
    <property type="match status" value="2"/>
</dbReference>
<dbReference type="PANTHER" id="PTHR43834">
    <property type="entry name" value="GTPASE DER"/>
    <property type="match status" value="1"/>
</dbReference>
<dbReference type="PANTHER" id="PTHR43834:SF6">
    <property type="entry name" value="GTPASE DER"/>
    <property type="match status" value="1"/>
</dbReference>
<dbReference type="Pfam" id="PF14714">
    <property type="entry name" value="KH_dom-like"/>
    <property type="match status" value="1"/>
</dbReference>
<dbReference type="Pfam" id="PF01926">
    <property type="entry name" value="MMR_HSR1"/>
    <property type="match status" value="2"/>
</dbReference>
<dbReference type="PIRSF" id="PIRSF006485">
    <property type="entry name" value="GTP-binding_EngA"/>
    <property type="match status" value="1"/>
</dbReference>
<dbReference type="PRINTS" id="PR00326">
    <property type="entry name" value="GTP1OBG"/>
</dbReference>
<dbReference type="SUPFAM" id="SSF52540">
    <property type="entry name" value="P-loop containing nucleoside triphosphate hydrolases"/>
    <property type="match status" value="2"/>
</dbReference>
<dbReference type="PROSITE" id="PS51712">
    <property type="entry name" value="G_ENGA"/>
    <property type="match status" value="2"/>
</dbReference>
<protein>
    <recommendedName>
        <fullName evidence="1">GTPase Der</fullName>
    </recommendedName>
    <alternativeName>
        <fullName evidence="1">GTP-binding protein EngA</fullName>
    </alternativeName>
</protein>
<reference key="1">
    <citation type="journal article" date="2004" name="Nucleic Acids Res.">
        <title>The genome sequence of Bacillus cereus ATCC 10987 reveals metabolic adaptations and a large plasmid related to Bacillus anthracis pXO1.</title>
        <authorList>
            <person name="Rasko D.A."/>
            <person name="Ravel J."/>
            <person name="Oekstad O.A."/>
            <person name="Helgason E."/>
            <person name="Cer R.Z."/>
            <person name="Jiang L."/>
            <person name="Shores K.A."/>
            <person name="Fouts D.E."/>
            <person name="Tourasse N.J."/>
            <person name="Angiuoli S.V."/>
            <person name="Kolonay J.F."/>
            <person name="Nelson W.C."/>
            <person name="Kolstoe A.-B."/>
            <person name="Fraser C.M."/>
            <person name="Read T.D."/>
        </authorList>
    </citation>
    <scope>NUCLEOTIDE SEQUENCE [LARGE SCALE GENOMIC DNA]</scope>
    <source>
        <strain>ATCC 10987 / NRS 248</strain>
    </source>
</reference>
<proteinExistence type="inferred from homology"/>
<comment type="function">
    <text evidence="1">GTPase that plays an essential role in the late steps of ribosome biogenesis.</text>
</comment>
<comment type="subunit">
    <text evidence="1">Associates with the 50S ribosomal subunit.</text>
</comment>
<comment type="similarity">
    <text evidence="1">Belongs to the TRAFAC class TrmE-Era-EngA-EngB-Septin-like GTPase superfamily. EngA (Der) GTPase family.</text>
</comment>
<sequence length="436" mass="48604">MPKPVIAIVGRPNVGKSTIFNRIVGERVSIVEDIPGVTRDRIYSAGEWLNHEFNIIDTGGIDIGDEPFLTQIRQQAEVAIDEADVIIFMTNGRDGVTAADEEVAKILYRSNKPVVLAVNKVDNPEMRSDIYDFYALGFGEPFPISGTHGLGLGDLLDEAAQHFPKIEEDGYDEDTIRFSLIGRPNVGKSSLVNALLGQERVIVSNVAGTTRDAVDTPYSKDGKDYVIIDTAGMRKKGKVYESTEKYSVLRALRAIERSDVVLVVLDGEEGIIEQDKKIAGYAHDSGRAVVIVVNKWDAVKKDEKTMKAFEENIRAHFQFLDYAPIVFLSAKTRKRTQTLIPVIDEVNESHSIRIQTNVLNDVIMDAVAMNPTPTHNGSRLKIFYATQVAVKPPTFVVFVNDPELLHFSYERFLKNRLRESFGFVGTPIHIIARARD</sequence>
<organism>
    <name type="scientific">Bacillus cereus (strain ATCC 10987 / NRS 248)</name>
    <dbReference type="NCBI Taxonomy" id="222523"/>
    <lineage>
        <taxon>Bacteria</taxon>
        <taxon>Bacillati</taxon>
        <taxon>Bacillota</taxon>
        <taxon>Bacilli</taxon>
        <taxon>Bacillales</taxon>
        <taxon>Bacillaceae</taxon>
        <taxon>Bacillus</taxon>
        <taxon>Bacillus cereus group</taxon>
    </lineage>
</organism>
<keyword id="KW-0342">GTP-binding</keyword>
<keyword id="KW-0547">Nucleotide-binding</keyword>
<keyword id="KW-0677">Repeat</keyword>
<keyword id="KW-0690">Ribosome biogenesis</keyword>
<accession>Q73AZ1</accession>
<evidence type="ECO:0000255" key="1">
    <source>
        <dbReference type="HAMAP-Rule" id="MF_00195"/>
    </source>
</evidence>